<comment type="function">
    <text>Binds to GC box promoters elements and selectively activates mRNA synthesis from genes that contain functional recognition sites.</text>
</comment>
<comment type="interaction">
    <interactant intactId="EBI-8651703">
        <id>Q02086</id>
    </interactant>
    <interactant intactId="EBI-744695">
        <id>Q8N9N5</id>
        <label>BANP</label>
    </interactant>
    <organismsDiffer>false</organismsDiffer>
    <experiments>4</experiments>
</comment>
<comment type="interaction">
    <interactant intactId="EBI-8651703">
        <id>Q02086</id>
    </interactant>
    <interactant intactId="EBI-701903">
        <id>Q14192</id>
        <label>FHL2</label>
    </interactant>
    <organismsDiffer>false</organismsDiffer>
    <experiments>4</experiments>
</comment>
<comment type="interaction">
    <interactant intactId="EBI-8651703">
        <id>Q02086</id>
    </interactant>
    <interactant intactId="EBI-355924">
        <id>P33993</id>
        <label>MCM7</label>
    </interactant>
    <organismsDiffer>false</organismsDiffer>
    <experiments>3</experiments>
</comment>
<comment type="interaction">
    <interactant intactId="EBI-9088579">
        <id>Q02086-2</id>
    </interactant>
    <interactant intactId="EBI-11524452">
        <id>Q8N9N5-2</id>
        <label>BANP</label>
    </interactant>
    <organismsDiffer>false</organismsDiffer>
    <experiments>3</experiments>
</comment>
<comment type="interaction">
    <interactant intactId="EBI-9088579">
        <id>Q02086-2</id>
    </interactant>
    <interactant intactId="EBI-739784">
        <id>Q9BW66</id>
        <label>CINP</label>
    </interactant>
    <organismsDiffer>false</organismsDiffer>
    <experiments>3</experiments>
</comment>
<comment type="interaction">
    <interactant intactId="EBI-9088579">
        <id>Q02086-2</id>
    </interactant>
    <interactant intactId="EBI-348399">
        <id>P22607</id>
        <label>FGFR3</label>
    </interactant>
    <organismsDiffer>false</organismsDiffer>
    <experiments>3</experiments>
</comment>
<comment type="interaction">
    <interactant intactId="EBI-9088579">
        <id>Q02086-2</id>
    </interactant>
    <interactant intactId="EBI-701903">
        <id>Q14192</id>
        <label>FHL2</label>
    </interactant>
    <organismsDiffer>false</organismsDiffer>
    <experiments>3</experiments>
</comment>
<comment type="interaction">
    <interactant intactId="EBI-9088579">
        <id>Q02086-2</id>
    </interactant>
    <interactant intactId="EBI-351506">
        <id>P06396</id>
        <label>GSN</label>
    </interactant>
    <organismsDiffer>false</organismsDiffer>
    <experiments>3</experiments>
</comment>
<comment type="interaction">
    <interactant intactId="EBI-9088579">
        <id>Q02086-2</id>
    </interactant>
    <interactant intactId="EBI-11956831">
        <id>Q13952-2</id>
        <label>NFYC</label>
    </interactant>
    <organismsDiffer>false</organismsDiffer>
    <experiments>3</experiments>
</comment>
<comment type="interaction">
    <interactant intactId="EBI-9088579">
        <id>Q02086-2</id>
    </interactant>
    <interactant intactId="EBI-11742836">
        <id>Q16656-4</id>
        <label>NRF1</label>
    </interactant>
    <organismsDiffer>false</organismsDiffer>
    <experiments>3</experiments>
</comment>
<comment type="interaction">
    <interactant intactId="EBI-9088579">
        <id>Q02086-2</id>
    </interactant>
    <interactant intactId="EBI-2798044">
        <id>Q2TAL8</id>
        <label>QRICH1</label>
    </interactant>
    <organismsDiffer>false</organismsDiffer>
    <experiments>3</experiments>
</comment>
<comment type="interaction">
    <interactant intactId="EBI-9088579">
        <id>Q02086-2</id>
    </interactant>
    <interactant intactId="EBI-741480">
        <id>Q9UMX0</id>
        <label>UBQLN1</label>
    </interactant>
    <organismsDiffer>false</organismsDiffer>
    <experiments>3</experiments>
</comment>
<comment type="subcellular location">
    <subcellularLocation>
        <location>Nucleus</location>
    </subcellularLocation>
</comment>
<comment type="alternative products">
    <event type="alternative splicing"/>
    <isoform>
        <id>Q02086-1</id>
        <name>1</name>
        <sequence type="displayed"/>
    </isoform>
    <isoform>
        <id>Q02086-2</id>
        <name>2</name>
        <sequence type="described" ref="VSP_022021"/>
    </isoform>
</comment>
<comment type="domain">
    <text evidence="3">The 9aaTAD motif is a transactivation domain present in a large number of yeast and animal transcription factors. In SP2, the motif is inactive.</text>
</comment>
<comment type="similarity">
    <text evidence="5">Belongs to the Sp1 C2H2-type zinc-finger protein family.</text>
</comment>
<comment type="sequence caution" evidence="5">
    <conflict type="erroneous initiation">
        <sequence resource="EMBL-CDS" id="AAH16680"/>
    </conflict>
</comment>
<comment type="sequence caution" evidence="5">
    <conflict type="erroneous initiation">
        <sequence resource="EMBL-CDS" id="AAH33814"/>
    </conflict>
</comment>
<comment type="sequence caution" evidence="5">
    <conflict type="erroneous initiation">
        <sequence resource="EMBL-CDS" id="BAA05923"/>
    </conflict>
</comment>
<accession>Q02086</accession>
<accession>A6NK74</accession>
<gene>
    <name type="primary">SP2</name>
    <name type="synonym">KIAA0048</name>
</gene>
<sequence length="613" mass="64900">MSDPQTSMAATAAVSPSDYLQPAASTTQDSQPSPLALLAATCSKIGPPAVEAAVTPPAPPQPTPRKLVPIKPAPLPLSPGKNSFGILSSKGNILQIQGSQLSASYPGGQLVFAIQNPTMINKGTRSNANIQYQAVPQIQASNSQTIQVQPNLTNQIQIIPGTNQAIITPSPSSHKPVPIKPAPIQKSSTTTTPVQSGANVVKLTGGGGNVTLTLPVNNLVNASDTGAPTQLLTESPPTPLSKTNKKARKKSLPASQPPVAVAEQVETVLIETTADNIIQAGNNLLIVQSPGGGQPAVVQQVQVVPPKAEQQQVVQIPQQALRVVQAASATLPTVPQKPSQNFQIQAAEPTPTQVYIRTPSGEVQTVLVQDSPPATAAATSNTTCSSPASRAPHLSGTSKKHSAAILRKERPLPKIAPAGSIISLNAAQLAAAAQAMQTININGVQVQGVPVTITNTGGQQQLTVQNVSGNNLTISGLSPTQIQLQMEQALAGETQPGEKRRRMACTCPNCKDGEKRSGEQGKKKHVCHIPDCGKTFRKTSLLRAHVRLHTGERPFVCNWFFCGKRFTRSDELQRHARTHTGDKRFECAQCQKRFMRSDHLTKHYKTHLVTKNL</sequence>
<name>SP2_HUMAN</name>
<evidence type="ECO:0000255" key="1">
    <source>
        <dbReference type="PROSITE-ProRule" id="PRU00042"/>
    </source>
</evidence>
<evidence type="ECO:0000256" key="2">
    <source>
        <dbReference type="SAM" id="MobiDB-lite"/>
    </source>
</evidence>
<evidence type="ECO:0000269" key="3">
    <source>
    </source>
</evidence>
<evidence type="ECO:0000303" key="4">
    <source>
    </source>
</evidence>
<evidence type="ECO:0000305" key="5"/>
<evidence type="ECO:0007744" key="6">
    <source>
    </source>
</evidence>
<evidence type="ECO:0007744" key="7">
    <source>
    </source>
</evidence>
<organism>
    <name type="scientific">Homo sapiens</name>
    <name type="common">Human</name>
    <dbReference type="NCBI Taxonomy" id="9606"/>
    <lineage>
        <taxon>Eukaryota</taxon>
        <taxon>Metazoa</taxon>
        <taxon>Chordata</taxon>
        <taxon>Craniata</taxon>
        <taxon>Vertebrata</taxon>
        <taxon>Euteleostomi</taxon>
        <taxon>Mammalia</taxon>
        <taxon>Eutheria</taxon>
        <taxon>Euarchontoglires</taxon>
        <taxon>Primates</taxon>
        <taxon>Haplorrhini</taxon>
        <taxon>Catarrhini</taxon>
        <taxon>Hominidae</taxon>
        <taxon>Homo</taxon>
    </lineage>
</organism>
<reference key="1">
    <citation type="journal article" date="1994" name="DNA Res.">
        <title>Prediction of the coding sequences of unidentified human genes. II. The coding sequences of 40 new genes (KIAA0041-KIAA0080) deduced by analysis of cDNA clones from human cell line KG-1.</title>
        <authorList>
            <person name="Nomura N."/>
            <person name="Nagase T."/>
            <person name="Miyajima N."/>
            <person name="Sazuka T."/>
            <person name="Tanaka A."/>
            <person name="Sato S."/>
            <person name="Seki N."/>
            <person name="Kawarabayasi Y."/>
            <person name="Ishikawa K."/>
            <person name="Tabata S."/>
        </authorList>
    </citation>
    <scope>NUCLEOTIDE SEQUENCE [LARGE SCALE MRNA] (ISOFORM 2)</scope>
    <source>
        <tissue>Bone marrow</tissue>
    </source>
</reference>
<reference key="2">
    <citation type="journal article" date="2006" name="Nature">
        <title>DNA sequence of human chromosome 17 and analysis of rearrangement in the human lineage.</title>
        <authorList>
            <person name="Zody M.C."/>
            <person name="Garber M."/>
            <person name="Adams D.J."/>
            <person name="Sharpe T."/>
            <person name="Harrow J."/>
            <person name="Lupski J.R."/>
            <person name="Nicholson C."/>
            <person name="Searle S.M."/>
            <person name="Wilming L."/>
            <person name="Young S.K."/>
            <person name="Abouelleil A."/>
            <person name="Allen N.R."/>
            <person name="Bi W."/>
            <person name="Bloom T."/>
            <person name="Borowsky M.L."/>
            <person name="Bugalter B.E."/>
            <person name="Butler J."/>
            <person name="Chang J.L."/>
            <person name="Chen C.-K."/>
            <person name="Cook A."/>
            <person name="Corum B."/>
            <person name="Cuomo C.A."/>
            <person name="de Jong P.J."/>
            <person name="DeCaprio D."/>
            <person name="Dewar K."/>
            <person name="FitzGerald M."/>
            <person name="Gilbert J."/>
            <person name="Gibson R."/>
            <person name="Gnerre S."/>
            <person name="Goldstein S."/>
            <person name="Grafham D.V."/>
            <person name="Grocock R."/>
            <person name="Hafez N."/>
            <person name="Hagopian D.S."/>
            <person name="Hart E."/>
            <person name="Norman C.H."/>
            <person name="Humphray S."/>
            <person name="Jaffe D.B."/>
            <person name="Jones M."/>
            <person name="Kamal M."/>
            <person name="Khodiyar V.K."/>
            <person name="LaButti K."/>
            <person name="Laird G."/>
            <person name="Lehoczky J."/>
            <person name="Liu X."/>
            <person name="Lokyitsang T."/>
            <person name="Loveland J."/>
            <person name="Lui A."/>
            <person name="Macdonald P."/>
            <person name="Major J.E."/>
            <person name="Matthews L."/>
            <person name="Mauceli E."/>
            <person name="McCarroll S.A."/>
            <person name="Mihalev A.H."/>
            <person name="Mudge J."/>
            <person name="Nguyen C."/>
            <person name="Nicol R."/>
            <person name="O'Leary S.B."/>
            <person name="Osoegawa K."/>
            <person name="Schwartz D.C."/>
            <person name="Shaw-Smith C."/>
            <person name="Stankiewicz P."/>
            <person name="Steward C."/>
            <person name="Swarbreck D."/>
            <person name="Venkataraman V."/>
            <person name="Whittaker C.A."/>
            <person name="Yang X."/>
            <person name="Zimmer A.R."/>
            <person name="Bradley A."/>
            <person name="Hubbard T."/>
            <person name="Birren B.W."/>
            <person name="Rogers J."/>
            <person name="Lander E.S."/>
            <person name="Nusbaum C."/>
        </authorList>
    </citation>
    <scope>NUCLEOTIDE SEQUENCE [LARGE SCALE GENOMIC DNA]</scope>
</reference>
<reference key="3">
    <citation type="submission" date="2005-09" db="EMBL/GenBank/DDBJ databases">
        <authorList>
            <person name="Mural R.J."/>
            <person name="Istrail S."/>
            <person name="Sutton G.G."/>
            <person name="Florea L."/>
            <person name="Halpern A.L."/>
            <person name="Mobarry C.M."/>
            <person name="Lippert R."/>
            <person name="Walenz B."/>
            <person name="Shatkay H."/>
            <person name="Dew I."/>
            <person name="Miller J.R."/>
            <person name="Flanigan M.J."/>
            <person name="Edwards N.J."/>
            <person name="Bolanos R."/>
            <person name="Fasulo D."/>
            <person name="Halldorsson B.V."/>
            <person name="Hannenhalli S."/>
            <person name="Turner R."/>
            <person name="Yooseph S."/>
            <person name="Lu F."/>
            <person name="Nusskern D.R."/>
            <person name="Shue B.C."/>
            <person name="Zheng X.H."/>
            <person name="Zhong F."/>
            <person name="Delcher A.L."/>
            <person name="Huson D.H."/>
            <person name="Kravitz S.A."/>
            <person name="Mouchard L."/>
            <person name="Reinert K."/>
            <person name="Remington K.A."/>
            <person name="Clark A.G."/>
            <person name="Waterman M.S."/>
            <person name="Eichler E.E."/>
            <person name="Adams M.D."/>
            <person name="Hunkapiller M.W."/>
            <person name="Myers E.W."/>
            <person name="Venter J.C."/>
        </authorList>
    </citation>
    <scope>NUCLEOTIDE SEQUENCE [LARGE SCALE GENOMIC DNA]</scope>
</reference>
<reference key="4">
    <citation type="journal article" date="2004" name="Genome Res.">
        <title>The status, quality, and expansion of the NIH full-length cDNA project: the Mammalian Gene Collection (MGC).</title>
        <authorList>
            <consortium name="The MGC Project Team"/>
        </authorList>
    </citation>
    <scope>NUCLEOTIDE SEQUENCE [LARGE SCALE MRNA] (ISOFORM 1)</scope>
    <source>
        <tissue>Lung</tissue>
        <tissue>Lymph</tissue>
        <tissue>Spleen</tissue>
    </source>
</reference>
<reference key="5">
    <citation type="journal article" date="1992" name="Mol. Cell. Biol.">
        <title>Cloning of GT box-binding proteins: a novel Sp1 multigene family regulating T-cell receptor gene expression.</title>
        <authorList>
            <person name="Kingsley C."/>
            <person name="Winoto A."/>
        </authorList>
    </citation>
    <scope>NUCLEOTIDE SEQUENCE [MRNA] OF 119-613</scope>
</reference>
<reference key="6">
    <citation type="journal article" date="2008" name="Proc. Natl. Acad. Sci. U.S.A.">
        <title>A quantitative atlas of mitotic phosphorylation.</title>
        <authorList>
            <person name="Dephoure N."/>
            <person name="Zhou C."/>
            <person name="Villen J."/>
            <person name="Beausoleil S.A."/>
            <person name="Bakalarski C.E."/>
            <person name="Elledge S.J."/>
            <person name="Gygi S.P."/>
        </authorList>
    </citation>
    <scope>IDENTIFICATION BY MASS SPECTROMETRY [LARGE SCALE ANALYSIS]</scope>
    <source>
        <tissue>Cervix carcinoma</tissue>
    </source>
</reference>
<reference key="7">
    <citation type="journal article" date="2009" name="Anal. Chem.">
        <title>Lys-N and trypsin cover complementary parts of the phosphoproteome in a refined SCX-based approach.</title>
        <authorList>
            <person name="Gauci S."/>
            <person name="Helbig A.O."/>
            <person name="Slijper M."/>
            <person name="Krijgsveld J."/>
            <person name="Heck A.J."/>
            <person name="Mohammed S."/>
        </authorList>
    </citation>
    <scope>IDENTIFICATION BY MASS SPECTROMETRY [LARGE SCALE ANALYSIS]</scope>
</reference>
<reference key="8">
    <citation type="journal article" date="2010" name="Sci. Signal.">
        <title>Quantitative phosphoproteomics reveals widespread full phosphorylation site occupancy during mitosis.</title>
        <authorList>
            <person name="Olsen J.V."/>
            <person name="Vermeulen M."/>
            <person name="Santamaria A."/>
            <person name="Kumar C."/>
            <person name="Miller M.L."/>
            <person name="Jensen L.J."/>
            <person name="Gnad F."/>
            <person name="Cox J."/>
            <person name="Jensen T.S."/>
            <person name="Nigg E.A."/>
            <person name="Brunak S."/>
            <person name="Mann M."/>
        </authorList>
    </citation>
    <scope>PHOSPHORYLATION [LARGE SCALE ANALYSIS] AT SER-78</scope>
    <scope>IDENTIFICATION BY MASS SPECTROMETRY [LARGE SCALE ANALYSIS]</scope>
    <source>
        <tissue>Cervix carcinoma</tissue>
    </source>
</reference>
<reference key="9">
    <citation type="journal article" date="2013" name="J. Proteome Res.">
        <title>Toward a comprehensive characterization of a human cancer cell phosphoproteome.</title>
        <authorList>
            <person name="Zhou H."/>
            <person name="Di Palma S."/>
            <person name="Preisinger C."/>
            <person name="Peng M."/>
            <person name="Polat A.N."/>
            <person name="Heck A.J."/>
            <person name="Mohammed S."/>
        </authorList>
    </citation>
    <scope>PHOSPHORYLATION [LARGE SCALE ANALYSIS] AT SER-78</scope>
    <scope>IDENTIFICATION BY MASS SPECTROMETRY [LARGE SCALE ANALYSIS]</scope>
    <source>
        <tissue>Cervix carcinoma</tissue>
        <tissue>Erythroleukemia</tissue>
    </source>
</reference>
<reference key="10">
    <citation type="journal article" date="2020" name="Cell. Mol. Life Sci.">
        <title>The evolution of the 9aaTAD domain in Sp2 proteins: inactivation with valines and intron reservoirs.</title>
        <authorList>
            <person name="Piskacek M."/>
            <person name="Havelka M."/>
            <person name="Jendruchova K."/>
            <person name="Knight A."/>
            <person name="Keegan L.P."/>
        </authorList>
    </citation>
    <scope>INACTIVATION OF 9AATAD MOTIF</scope>
</reference>
<keyword id="KW-0010">Activator</keyword>
<keyword id="KW-0025">Alternative splicing</keyword>
<keyword id="KW-0238">DNA-binding</keyword>
<keyword id="KW-0479">Metal-binding</keyword>
<keyword id="KW-0539">Nucleus</keyword>
<keyword id="KW-0597">Phosphoprotein</keyword>
<keyword id="KW-1267">Proteomics identification</keyword>
<keyword id="KW-1185">Reference proteome</keyword>
<keyword id="KW-0677">Repeat</keyword>
<keyword id="KW-0804">Transcription</keyword>
<keyword id="KW-0805">Transcription regulation</keyword>
<keyword id="KW-0862">Zinc</keyword>
<keyword id="KW-0863">Zinc-finger</keyword>
<proteinExistence type="evidence at protein level"/>
<dbReference type="EMBL" id="D28588">
    <property type="protein sequence ID" value="BAA05923.2"/>
    <property type="status" value="ALT_INIT"/>
    <property type="molecule type" value="mRNA"/>
</dbReference>
<dbReference type="EMBL" id="AC018521">
    <property type="status" value="NOT_ANNOTATED_CDS"/>
    <property type="molecule type" value="Genomic_DNA"/>
</dbReference>
<dbReference type="EMBL" id="CH471109">
    <property type="protein sequence ID" value="EAW94785.1"/>
    <property type="molecule type" value="Genomic_DNA"/>
</dbReference>
<dbReference type="EMBL" id="BC016680">
    <property type="protein sequence ID" value="AAH16680.1"/>
    <property type="status" value="ALT_INIT"/>
    <property type="molecule type" value="mRNA"/>
</dbReference>
<dbReference type="EMBL" id="BC033814">
    <property type="protein sequence ID" value="AAH33814.1"/>
    <property type="status" value="ALT_INIT"/>
    <property type="molecule type" value="mRNA"/>
</dbReference>
<dbReference type="EMBL" id="M97190">
    <property type="protein sequence ID" value="AAA36629.1"/>
    <property type="molecule type" value="mRNA"/>
</dbReference>
<dbReference type="CCDS" id="CCDS11521.2">
    <molecule id="Q02086-1"/>
</dbReference>
<dbReference type="PIR" id="A44489">
    <property type="entry name" value="A44489"/>
</dbReference>
<dbReference type="RefSeq" id="NP_003101.3">
    <molecule id="Q02086-1"/>
    <property type="nucleotide sequence ID" value="NM_003110.5"/>
</dbReference>
<dbReference type="RefSeq" id="XP_047292533.1">
    <molecule id="Q02086-2"/>
    <property type="nucleotide sequence ID" value="XM_047436577.1"/>
</dbReference>
<dbReference type="RefSeq" id="XP_054172963.1">
    <molecule id="Q02086-2"/>
    <property type="nucleotide sequence ID" value="XM_054316988.1"/>
</dbReference>
<dbReference type="SMR" id="Q02086"/>
<dbReference type="BioGRID" id="112551">
    <property type="interactions" value="41"/>
</dbReference>
<dbReference type="FunCoup" id="Q02086">
    <property type="interactions" value="3440"/>
</dbReference>
<dbReference type="IntAct" id="Q02086">
    <property type="interactions" value="30"/>
</dbReference>
<dbReference type="MINT" id="Q02086"/>
<dbReference type="STRING" id="9606.ENSP00000365931"/>
<dbReference type="GlyCosmos" id="Q02086">
    <property type="glycosylation" value="3 sites, 1 glycan"/>
</dbReference>
<dbReference type="GlyGen" id="Q02086">
    <property type="glycosylation" value="8 sites, 1 O-linked glycan (4 sites)"/>
</dbReference>
<dbReference type="iPTMnet" id="Q02086"/>
<dbReference type="PhosphoSitePlus" id="Q02086"/>
<dbReference type="BioMuta" id="SP2"/>
<dbReference type="DMDM" id="119370531"/>
<dbReference type="jPOST" id="Q02086"/>
<dbReference type="MassIVE" id="Q02086"/>
<dbReference type="PaxDb" id="9606-ENSP00000365931"/>
<dbReference type="PeptideAtlas" id="Q02086"/>
<dbReference type="ProteomicsDB" id="58047">
    <molecule id="Q02086-1"/>
</dbReference>
<dbReference type="ProteomicsDB" id="58048">
    <molecule id="Q02086-2"/>
</dbReference>
<dbReference type="Pumba" id="Q02086"/>
<dbReference type="Antibodypedia" id="928">
    <property type="antibodies" value="180 antibodies from 30 providers"/>
</dbReference>
<dbReference type="DNASU" id="6668"/>
<dbReference type="Ensembl" id="ENST00000376741.5">
    <molecule id="Q02086-1"/>
    <property type="protein sequence ID" value="ENSP00000365931.4"/>
    <property type="gene ID" value="ENSG00000167182.16"/>
</dbReference>
<dbReference type="GeneID" id="6668"/>
<dbReference type="KEGG" id="hsa:6668"/>
<dbReference type="MANE-Select" id="ENST00000376741.5">
    <property type="protein sequence ID" value="ENSP00000365931.4"/>
    <property type="RefSeq nucleotide sequence ID" value="NM_003110.6"/>
    <property type="RefSeq protein sequence ID" value="NP_003101.3"/>
</dbReference>
<dbReference type="UCSC" id="uc002imk.3">
    <molecule id="Q02086-1"/>
    <property type="organism name" value="human"/>
</dbReference>
<dbReference type="AGR" id="HGNC:11207"/>
<dbReference type="CTD" id="6668"/>
<dbReference type="DisGeNET" id="6668"/>
<dbReference type="GeneCards" id="SP2"/>
<dbReference type="HGNC" id="HGNC:11207">
    <property type="gene designation" value="SP2"/>
</dbReference>
<dbReference type="HPA" id="ENSG00000167182">
    <property type="expression patterns" value="Low tissue specificity"/>
</dbReference>
<dbReference type="MIM" id="601801">
    <property type="type" value="gene"/>
</dbReference>
<dbReference type="neXtProt" id="NX_Q02086"/>
<dbReference type="OpenTargets" id="ENSG00000167182"/>
<dbReference type="PharmGKB" id="PA36044"/>
<dbReference type="VEuPathDB" id="HostDB:ENSG00000167182"/>
<dbReference type="eggNOG" id="KOG1721">
    <property type="taxonomic scope" value="Eukaryota"/>
</dbReference>
<dbReference type="GeneTree" id="ENSGT00940000159590"/>
<dbReference type="HOGENOM" id="CLU_034267_0_0_1"/>
<dbReference type="InParanoid" id="Q02086"/>
<dbReference type="OMA" id="RRANVVM"/>
<dbReference type="OrthoDB" id="6365676at2759"/>
<dbReference type="PAN-GO" id="Q02086">
    <property type="GO annotations" value="3 GO annotations based on evolutionary models"/>
</dbReference>
<dbReference type="PhylomeDB" id="Q02086"/>
<dbReference type="TreeFam" id="TF350150"/>
<dbReference type="PathwayCommons" id="Q02086"/>
<dbReference type="SignaLink" id="Q02086"/>
<dbReference type="SIGNOR" id="Q02086"/>
<dbReference type="BioGRID-ORCS" id="6668">
    <property type="hits" value="189 hits in 1185 CRISPR screens"/>
</dbReference>
<dbReference type="ChiTaRS" id="SP2">
    <property type="organism name" value="human"/>
</dbReference>
<dbReference type="GeneWiki" id="Sp2_transcription_factor"/>
<dbReference type="GenomeRNAi" id="6668"/>
<dbReference type="Pharos" id="Q02086">
    <property type="development level" value="Tbio"/>
</dbReference>
<dbReference type="PRO" id="PR:Q02086"/>
<dbReference type="Proteomes" id="UP000005640">
    <property type="component" value="Chromosome 17"/>
</dbReference>
<dbReference type="RNAct" id="Q02086">
    <property type="molecule type" value="protein"/>
</dbReference>
<dbReference type="Bgee" id="ENSG00000167182">
    <property type="expression patterns" value="Expressed in secondary oocyte and 188 other cell types or tissues"/>
</dbReference>
<dbReference type="ExpressionAtlas" id="Q02086">
    <property type="expression patterns" value="baseline and differential"/>
</dbReference>
<dbReference type="GO" id="GO:0000785">
    <property type="term" value="C:chromatin"/>
    <property type="evidence" value="ECO:0000247"/>
    <property type="project" value="NTNU_SB"/>
</dbReference>
<dbReference type="GO" id="GO:0005654">
    <property type="term" value="C:nucleoplasm"/>
    <property type="evidence" value="ECO:0000314"/>
    <property type="project" value="HPA"/>
</dbReference>
<dbReference type="GO" id="GO:0000981">
    <property type="term" value="F:DNA-binding transcription factor activity, RNA polymerase II-specific"/>
    <property type="evidence" value="ECO:0000247"/>
    <property type="project" value="NTNU_SB"/>
</dbReference>
<dbReference type="GO" id="GO:0001227">
    <property type="term" value="F:DNA-binding transcription repressor activity, RNA polymerase II-specific"/>
    <property type="evidence" value="ECO:0000314"/>
    <property type="project" value="NTNU_SB"/>
</dbReference>
<dbReference type="GO" id="GO:0042826">
    <property type="term" value="F:histone deacetylase binding"/>
    <property type="evidence" value="ECO:0000353"/>
    <property type="project" value="BHF-UCL"/>
</dbReference>
<dbReference type="GO" id="GO:0000978">
    <property type="term" value="F:RNA polymerase II cis-regulatory region sequence-specific DNA binding"/>
    <property type="evidence" value="ECO:0000314"/>
    <property type="project" value="NTNU_SB"/>
</dbReference>
<dbReference type="GO" id="GO:1990837">
    <property type="term" value="F:sequence-specific double-stranded DNA binding"/>
    <property type="evidence" value="ECO:0000314"/>
    <property type="project" value="ARUK-UCL"/>
</dbReference>
<dbReference type="GO" id="GO:0008270">
    <property type="term" value="F:zinc ion binding"/>
    <property type="evidence" value="ECO:0007669"/>
    <property type="project" value="UniProtKB-KW"/>
</dbReference>
<dbReference type="GO" id="GO:0006955">
    <property type="term" value="P:immune response"/>
    <property type="evidence" value="ECO:0000304"/>
    <property type="project" value="ProtInc"/>
</dbReference>
<dbReference type="GO" id="GO:0000122">
    <property type="term" value="P:negative regulation of transcription by RNA polymerase II"/>
    <property type="evidence" value="ECO:0000314"/>
    <property type="project" value="NTNU_SB"/>
</dbReference>
<dbReference type="GO" id="GO:0006357">
    <property type="term" value="P:regulation of transcription by RNA polymerase II"/>
    <property type="evidence" value="ECO:0000318"/>
    <property type="project" value="GO_Central"/>
</dbReference>
<dbReference type="CDD" id="cd22540">
    <property type="entry name" value="SP2_N"/>
    <property type="match status" value="1"/>
</dbReference>
<dbReference type="FunFam" id="3.30.160.60:FF:000421">
    <property type="entry name" value="Sp2 transcription factor"/>
    <property type="match status" value="1"/>
</dbReference>
<dbReference type="FunFam" id="3.30.160.60:FF:000455">
    <property type="entry name" value="Transcription factor Sp2"/>
    <property type="match status" value="1"/>
</dbReference>
<dbReference type="FunFam" id="3.30.160.60:FF:000014">
    <property type="entry name" value="Transcription factor Sp3"/>
    <property type="match status" value="1"/>
</dbReference>
<dbReference type="Gene3D" id="3.30.160.60">
    <property type="entry name" value="Classic Zinc Finger"/>
    <property type="match status" value="3"/>
</dbReference>
<dbReference type="InterPro" id="IPR036236">
    <property type="entry name" value="Znf_C2H2_sf"/>
</dbReference>
<dbReference type="InterPro" id="IPR013087">
    <property type="entry name" value="Znf_C2H2_type"/>
</dbReference>
<dbReference type="PANTHER" id="PTHR23235">
    <property type="entry name" value="KRUEPPEL-LIKE TRANSCRIPTION FACTOR"/>
    <property type="match status" value="1"/>
</dbReference>
<dbReference type="PANTHER" id="PTHR23235:SF1">
    <property type="entry name" value="TRANSCRIPTION FACTOR SP2"/>
    <property type="match status" value="1"/>
</dbReference>
<dbReference type="Pfam" id="PF00096">
    <property type="entry name" value="zf-C2H2"/>
    <property type="match status" value="3"/>
</dbReference>
<dbReference type="SMART" id="SM00355">
    <property type="entry name" value="ZnF_C2H2"/>
    <property type="match status" value="3"/>
</dbReference>
<dbReference type="SUPFAM" id="SSF57667">
    <property type="entry name" value="beta-beta-alpha zinc fingers"/>
    <property type="match status" value="3"/>
</dbReference>
<dbReference type="PROSITE" id="PS00028">
    <property type="entry name" value="ZINC_FINGER_C2H2_1"/>
    <property type="match status" value="3"/>
</dbReference>
<dbReference type="PROSITE" id="PS50157">
    <property type="entry name" value="ZINC_FINGER_C2H2_2"/>
    <property type="match status" value="3"/>
</dbReference>
<protein>
    <recommendedName>
        <fullName>Transcription factor Sp2</fullName>
    </recommendedName>
</protein>
<feature type="chain" id="PRO_0000047140" description="Transcription factor Sp2">
    <location>
        <begin position="1"/>
        <end position="613"/>
    </location>
</feature>
<feature type="zinc finger region" description="C2H2-type 1" evidence="1">
    <location>
        <begin position="525"/>
        <end position="549"/>
    </location>
</feature>
<feature type="zinc finger region" description="C2H2-type 2" evidence="1">
    <location>
        <begin position="555"/>
        <end position="579"/>
    </location>
</feature>
<feature type="zinc finger region" description="C2H2-type 3" evidence="1">
    <location>
        <begin position="585"/>
        <end position="607"/>
    </location>
</feature>
<feature type="region of interest" description="Disordered" evidence="2">
    <location>
        <begin position="1"/>
        <end position="32"/>
    </location>
</feature>
<feature type="region of interest" description="Disordered" evidence="2">
    <location>
        <begin position="225"/>
        <end position="258"/>
    </location>
</feature>
<feature type="region of interest" description="Disordered" evidence="2">
    <location>
        <begin position="372"/>
        <end position="404"/>
    </location>
</feature>
<feature type="short sequence motif" description="9aaTAD; inactive" evidence="3">
    <location>
        <begin position="361"/>
        <end position="369"/>
    </location>
</feature>
<feature type="compositionally biased region" description="Polar residues" evidence="2">
    <location>
        <begin position="23"/>
        <end position="32"/>
    </location>
</feature>
<feature type="compositionally biased region" description="Polar residues" evidence="2">
    <location>
        <begin position="225"/>
        <end position="235"/>
    </location>
</feature>
<feature type="compositionally biased region" description="Low complexity" evidence="2">
    <location>
        <begin position="372"/>
        <end position="389"/>
    </location>
</feature>
<feature type="modified residue" description="Phosphoserine" evidence="6 7">
    <location>
        <position position="78"/>
    </location>
</feature>
<feature type="splice variant" id="VSP_022021" description="In isoform 2." evidence="4">
    <location>
        <begin position="1"/>
        <end position="7"/>
    </location>
</feature>